<name>PTH_BORPA</name>
<protein>
    <recommendedName>
        <fullName evidence="1">Peptidyl-tRNA hydrolase</fullName>
        <shortName evidence="1">Pth</shortName>
        <ecNumber evidence="1">3.1.1.29</ecNumber>
    </recommendedName>
</protein>
<feature type="chain" id="PRO_0000187701" description="Peptidyl-tRNA hydrolase">
    <location>
        <begin position="1"/>
        <end position="215"/>
    </location>
</feature>
<feature type="active site" description="Proton acceptor" evidence="1">
    <location>
        <position position="40"/>
    </location>
</feature>
<feature type="binding site" evidence="1">
    <location>
        <position position="35"/>
    </location>
    <ligand>
        <name>tRNA</name>
        <dbReference type="ChEBI" id="CHEBI:17843"/>
    </ligand>
</feature>
<feature type="binding site" evidence="1">
    <location>
        <position position="86"/>
    </location>
    <ligand>
        <name>tRNA</name>
        <dbReference type="ChEBI" id="CHEBI:17843"/>
    </ligand>
</feature>
<feature type="binding site" evidence="1">
    <location>
        <position position="88"/>
    </location>
    <ligand>
        <name>tRNA</name>
        <dbReference type="ChEBI" id="CHEBI:17843"/>
    </ligand>
</feature>
<feature type="binding site" evidence="1">
    <location>
        <position position="134"/>
    </location>
    <ligand>
        <name>tRNA</name>
        <dbReference type="ChEBI" id="CHEBI:17843"/>
    </ligand>
</feature>
<feature type="site" description="Discriminates between blocked and unblocked aminoacyl-tRNA" evidence="1">
    <location>
        <position position="30"/>
    </location>
</feature>
<feature type="site" description="Stabilizes the basic form of H active site to accept a proton" evidence="1">
    <location>
        <position position="113"/>
    </location>
</feature>
<reference key="1">
    <citation type="journal article" date="2003" name="Nat. Genet.">
        <title>Comparative analysis of the genome sequences of Bordetella pertussis, Bordetella parapertussis and Bordetella bronchiseptica.</title>
        <authorList>
            <person name="Parkhill J."/>
            <person name="Sebaihia M."/>
            <person name="Preston A."/>
            <person name="Murphy L.D."/>
            <person name="Thomson N.R."/>
            <person name="Harris D.E."/>
            <person name="Holden M.T.G."/>
            <person name="Churcher C.M."/>
            <person name="Bentley S.D."/>
            <person name="Mungall K.L."/>
            <person name="Cerdeno-Tarraga A.-M."/>
            <person name="Temple L."/>
            <person name="James K.D."/>
            <person name="Harris B."/>
            <person name="Quail M.A."/>
            <person name="Achtman M."/>
            <person name="Atkin R."/>
            <person name="Baker S."/>
            <person name="Basham D."/>
            <person name="Bason N."/>
            <person name="Cherevach I."/>
            <person name="Chillingworth T."/>
            <person name="Collins M."/>
            <person name="Cronin A."/>
            <person name="Davis P."/>
            <person name="Doggett J."/>
            <person name="Feltwell T."/>
            <person name="Goble A."/>
            <person name="Hamlin N."/>
            <person name="Hauser H."/>
            <person name="Holroyd S."/>
            <person name="Jagels K."/>
            <person name="Leather S."/>
            <person name="Moule S."/>
            <person name="Norberczak H."/>
            <person name="O'Neil S."/>
            <person name="Ormond D."/>
            <person name="Price C."/>
            <person name="Rabbinowitsch E."/>
            <person name="Rutter S."/>
            <person name="Sanders M."/>
            <person name="Saunders D."/>
            <person name="Seeger K."/>
            <person name="Sharp S."/>
            <person name="Simmonds M."/>
            <person name="Skelton J."/>
            <person name="Squares R."/>
            <person name="Squares S."/>
            <person name="Stevens K."/>
            <person name="Unwin L."/>
            <person name="Whitehead S."/>
            <person name="Barrell B.G."/>
            <person name="Maskell D.J."/>
        </authorList>
    </citation>
    <scope>NUCLEOTIDE SEQUENCE [LARGE SCALE GENOMIC DNA]</scope>
    <source>
        <strain>12822 / ATCC BAA-587 / NCTC 13253</strain>
    </source>
</reference>
<accession>Q7W179</accession>
<proteinExistence type="inferred from homology"/>
<evidence type="ECO:0000255" key="1">
    <source>
        <dbReference type="HAMAP-Rule" id="MF_00083"/>
    </source>
</evidence>
<dbReference type="EC" id="3.1.1.29" evidence="1"/>
<dbReference type="EMBL" id="BX640425">
    <property type="protein sequence ID" value="CAE40228.1"/>
    <property type="molecule type" value="Genomic_DNA"/>
</dbReference>
<dbReference type="SMR" id="Q7W179"/>
<dbReference type="KEGG" id="bpa:BPP0819"/>
<dbReference type="HOGENOM" id="CLU_062456_3_1_4"/>
<dbReference type="Proteomes" id="UP000001421">
    <property type="component" value="Chromosome"/>
</dbReference>
<dbReference type="GO" id="GO:0005737">
    <property type="term" value="C:cytoplasm"/>
    <property type="evidence" value="ECO:0007669"/>
    <property type="project" value="UniProtKB-SubCell"/>
</dbReference>
<dbReference type="GO" id="GO:0004045">
    <property type="term" value="F:peptidyl-tRNA hydrolase activity"/>
    <property type="evidence" value="ECO:0007669"/>
    <property type="project" value="UniProtKB-UniRule"/>
</dbReference>
<dbReference type="GO" id="GO:0000049">
    <property type="term" value="F:tRNA binding"/>
    <property type="evidence" value="ECO:0007669"/>
    <property type="project" value="UniProtKB-UniRule"/>
</dbReference>
<dbReference type="GO" id="GO:0006515">
    <property type="term" value="P:protein quality control for misfolded or incompletely synthesized proteins"/>
    <property type="evidence" value="ECO:0007669"/>
    <property type="project" value="UniProtKB-UniRule"/>
</dbReference>
<dbReference type="GO" id="GO:0072344">
    <property type="term" value="P:rescue of stalled ribosome"/>
    <property type="evidence" value="ECO:0007669"/>
    <property type="project" value="UniProtKB-UniRule"/>
</dbReference>
<dbReference type="CDD" id="cd00462">
    <property type="entry name" value="PTH"/>
    <property type="match status" value="1"/>
</dbReference>
<dbReference type="FunFam" id="3.40.50.1470:FF:000001">
    <property type="entry name" value="Peptidyl-tRNA hydrolase"/>
    <property type="match status" value="1"/>
</dbReference>
<dbReference type="Gene3D" id="3.40.50.1470">
    <property type="entry name" value="Peptidyl-tRNA hydrolase"/>
    <property type="match status" value="1"/>
</dbReference>
<dbReference type="HAMAP" id="MF_00083">
    <property type="entry name" value="Pept_tRNA_hydro_bact"/>
    <property type="match status" value="1"/>
</dbReference>
<dbReference type="InterPro" id="IPR001328">
    <property type="entry name" value="Pept_tRNA_hydro"/>
</dbReference>
<dbReference type="InterPro" id="IPR018171">
    <property type="entry name" value="Pept_tRNA_hydro_CS"/>
</dbReference>
<dbReference type="InterPro" id="IPR036416">
    <property type="entry name" value="Pept_tRNA_hydro_sf"/>
</dbReference>
<dbReference type="NCBIfam" id="TIGR00447">
    <property type="entry name" value="pth"/>
    <property type="match status" value="1"/>
</dbReference>
<dbReference type="PANTHER" id="PTHR17224">
    <property type="entry name" value="PEPTIDYL-TRNA HYDROLASE"/>
    <property type="match status" value="1"/>
</dbReference>
<dbReference type="PANTHER" id="PTHR17224:SF1">
    <property type="entry name" value="PEPTIDYL-TRNA HYDROLASE"/>
    <property type="match status" value="1"/>
</dbReference>
<dbReference type="Pfam" id="PF01195">
    <property type="entry name" value="Pept_tRNA_hydro"/>
    <property type="match status" value="1"/>
</dbReference>
<dbReference type="SUPFAM" id="SSF53178">
    <property type="entry name" value="Peptidyl-tRNA hydrolase-like"/>
    <property type="match status" value="1"/>
</dbReference>
<dbReference type="PROSITE" id="PS01195">
    <property type="entry name" value="PEPT_TRNA_HYDROL_1"/>
    <property type="match status" value="1"/>
</dbReference>
<dbReference type="PROSITE" id="PS01196">
    <property type="entry name" value="PEPT_TRNA_HYDROL_2"/>
    <property type="match status" value="1"/>
</dbReference>
<keyword id="KW-0963">Cytoplasm</keyword>
<keyword id="KW-0378">Hydrolase</keyword>
<keyword id="KW-0694">RNA-binding</keyword>
<keyword id="KW-0820">tRNA-binding</keyword>
<organism>
    <name type="scientific">Bordetella parapertussis (strain 12822 / ATCC BAA-587 / NCTC 13253)</name>
    <dbReference type="NCBI Taxonomy" id="257311"/>
    <lineage>
        <taxon>Bacteria</taxon>
        <taxon>Pseudomonadati</taxon>
        <taxon>Pseudomonadota</taxon>
        <taxon>Betaproteobacteria</taxon>
        <taxon>Burkholderiales</taxon>
        <taxon>Alcaligenaceae</taxon>
        <taxon>Bordetella</taxon>
    </lineage>
</organism>
<gene>
    <name evidence="1" type="primary">pth</name>
    <name type="ordered locus">BPP0819</name>
</gene>
<comment type="function">
    <text evidence="1">Hydrolyzes ribosome-free peptidyl-tRNAs (with 1 or more amino acids incorporated), which drop off the ribosome during protein synthesis, or as a result of ribosome stalling.</text>
</comment>
<comment type="function">
    <text evidence="1">Catalyzes the release of premature peptidyl moieties from peptidyl-tRNA molecules trapped in stalled 50S ribosomal subunits, and thus maintains levels of free tRNAs and 50S ribosomes.</text>
</comment>
<comment type="catalytic activity">
    <reaction evidence="1">
        <text>an N-acyl-L-alpha-aminoacyl-tRNA + H2O = an N-acyl-L-amino acid + a tRNA + H(+)</text>
        <dbReference type="Rhea" id="RHEA:54448"/>
        <dbReference type="Rhea" id="RHEA-COMP:10123"/>
        <dbReference type="Rhea" id="RHEA-COMP:13883"/>
        <dbReference type="ChEBI" id="CHEBI:15377"/>
        <dbReference type="ChEBI" id="CHEBI:15378"/>
        <dbReference type="ChEBI" id="CHEBI:59874"/>
        <dbReference type="ChEBI" id="CHEBI:78442"/>
        <dbReference type="ChEBI" id="CHEBI:138191"/>
        <dbReference type="EC" id="3.1.1.29"/>
    </reaction>
</comment>
<comment type="subunit">
    <text evidence="1">Monomer.</text>
</comment>
<comment type="subcellular location">
    <subcellularLocation>
        <location evidence="1">Cytoplasm</location>
    </subcellularLocation>
</comment>
<comment type="similarity">
    <text evidence="1">Belongs to the PTH family.</text>
</comment>
<sequence>MRRVLYFTNTRPDAYATMSDPIRLIVGLGNPGPDYETTRHNAGFWLADHLADDLRTAFALEKGFFGMLAKARHAGENVVLLKPITYMNRSGQSVGAVARFYKLAPEQVLVLHDELDLLPGQVKIKQGGGHAGHNGLKDIQAALGSPNFWRLRIGIGHPRSLGLAQQVADFVLHPPRREEQQQIDTVIDRCRAVVPAMLAGDFALATRELHGANGA</sequence>